<sequence>MPPDREEAGRRPAAILIAGPTASGKSALAARLAERHGGVVINTDSMQVYADLRRLTARPDPDEEARVPHRLYGHVDGAVNYSAGHFSRDAAALLATLGGRLPVFVGGTGLYFRALEQGFSELPPVPDTVRARVRDAAEGRPTEALHADLARHDPEGAARLRPSDRMRVMRALEIFLATGRPIASFYGDPVPGPLAGRDLRRIFLAPDRAALRERIDARFRTMIAEGALDEVARLRARRLDPMLPVMRAHGVPGLIAHLDGALSLDEAIARGQADTRAYAKRQLTWFRHQMGEAWRWVDPEGATVEDLL</sequence>
<proteinExistence type="inferred from homology"/>
<organism>
    <name type="scientific">Methylobacterium radiotolerans (strain ATCC 27329 / DSM 1819 / JCM 2831 / NBRC 15690 / NCIMB 10815 / 0-1)</name>
    <dbReference type="NCBI Taxonomy" id="426355"/>
    <lineage>
        <taxon>Bacteria</taxon>
        <taxon>Pseudomonadati</taxon>
        <taxon>Pseudomonadota</taxon>
        <taxon>Alphaproteobacteria</taxon>
        <taxon>Hyphomicrobiales</taxon>
        <taxon>Methylobacteriaceae</taxon>
        <taxon>Methylobacterium</taxon>
    </lineage>
</organism>
<protein>
    <recommendedName>
        <fullName evidence="1">tRNA dimethylallyltransferase</fullName>
        <ecNumber evidence="1">2.5.1.75</ecNumber>
    </recommendedName>
    <alternativeName>
        <fullName evidence="1">Dimethylallyl diphosphate:tRNA dimethylallyltransferase</fullName>
        <shortName evidence="1">DMAPP:tRNA dimethylallyltransferase</shortName>
        <shortName evidence="1">DMATase</shortName>
    </alternativeName>
    <alternativeName>
        <fullName evidence="1">Isopentenyl-diphosphate:tRNA isopentenyltransferase</fullName>
        <shortName evidence="1">IPP transferase</shortName>
        <shortName evidence="1">IPPT</shortName>
        <shortName evidence="1">IPTase</shortName>
    </alternativeName>
</protein>
<feature type="chain" id="PRO_1000191859" description="tRNA dimethylallyltransferase">
    <location>
        <begin position="1"/>
        <end position="308"/>
    </location>
</feature>
<feature type="region of interest" description="Interaction with substrate tRNA" evidence="1">
    <location>
        <begin position="44"/>
        <end position="47"/>
    </location>
</feature>
<feature type="binding site" evidence="1">
    <location>
        <begin position="19"/>
        <end position="26"/>
    </location>
    <ligand>
        <name>ATP</name>
        <dbReference type="ChEBI" id="CHEBI:30616"/>
    </ligand>
</feature>
<feature type="binding site" evidence="1">
    <location>
        <begin position="21"/>
        <end position="26"/>
    </location>
    <ligand>
        <name>substrate</name>
    </ligand>
</feature>
<feature type="site" description="Interaction with substrate tRNA" evidence="1">
    <location>
        <position position="108"/>
    </location>
</feature>
<feature type="site" description="Interaction with substrate tRNA" evidence="1">
    <location>
        <position position="130"/>
    </location>
</feature>
<gene>
    <name evidence="1" type="primary">miaA</name>
    <name type="ordered locus">Mrad2831_4532</name>
</gene>
<comment type="function">
    <text evidence="1">Catalyzes the transfer of a dimethylallyl group onto the adenine at position 37 in tRNAs that read codons beginning with uridine, leading to the formation of N6-(dimethylallyl)adenosine (i(6)A).</text>
</comment>
<comment type="catalytic activity">
    <reaction evidence="1">
        <text>adenosine(37) in tRNA + dimethylallyl diphosphate = N(6)-dimethylallyladenosine(37) in tRNA + diphosphate</text>
        <dbReference type="Rhea" id="RHEA:26482"/>
        <dbReference type="Rhea" id="RHEA-COMP:10162"/>
        <dbReference type="Rhea" id="RHEA-COMP:10375"/>
        <dbReference type="ChEBI" id="CHEBI:33019"/>
        <dbReference type="ChEBI" id="CHEBI:57623"/>
        <dbReference type="ChEBI" id="CHEBI:74411"/>
        <dbReference type="ChEBI" id="CHEBI:74415"/>
        <dbReference type="EC" id="2.5.1.75"/>
    </reaction>
</comment>
<comment type="cofactor">
    <cofactor evidence="1">
        <name>Mg(2+)</name>
        <dbReference type="ChEBI" id="CHEBI:18420"/>
    </cofactor>
</comment>
<comment type="subunit">
    <text evidence="1">Monomer.</text>
</comment>
<comment type="similarity">
    <text evidence="1">Belongs to the IPP transferase family.</text>
</comment>
<accession>B1M537</accession>
<evidence type="ECO:0000255" key="1">
    <source>
        <dbReference type="HAMAP-Rule" id="MF_00185"/>
    </source>
</evidence>
<keyword id="KW-0067">ATP-binding</keyword>
<keyword id="KW-0460">Magnesium</keyword>
<keyword id="KW-0547">Nucleotide-binding</keyword>
<keyword id="KW-0808">Transferase</keyword>
<keyword id="KW-0819">tRNA processing</keyword>
<name>MIAA_METRJ</name>
<dbReference type="EC" id="2.5.1.75" evidence="1"/>
<dbReference type="EMBL" id="CP001001">
    <property type="protein sequence ID" value="ACB26498.1"/>
    <property type="molecule type" value="Genomic_DNA"/>
</dbReference>
<dbReference type="RefSeq" id="WP_012321451.1">
    <property type="nucleotide sequence ID" value="NC_010505.1"/>
</dbReference>
<dbReference type="SMR" id="B1M537"/>
<dbReference type="STRING" id="426355.Mrad2831_4532"/>
<dbReference type="GeneID" id="6140598"/>
<dbReference type="KEGG" id="mrd:Mrad2831_4532"/>
<dbReference type="PATRIC" id="fig|426355.14.peg.4616"/>
<dbReference type="eggNOG" id="COG0324">
    <property type="taxonomic scope" value="Bacteria"/>
</dbReference>
<dbReference type="HOGENOM" id="CLU_032616_0_1_5"/>
<dbReference type="OrthoDB" id="9776390at2"/>
<dbReference type="Proteomes" id="UP000006589">
    <property type="component" value="Chromosome"/>
</dbReference>
<dbReference type="GO" id="GO:0005524">
    <property type="term" value="F:ATP binding"/>
    <property type="evidence" value="ECO:0007669"/>
    <property type="project" value="UniProtKB-UniRule"/>
</dbReference>
<dbReference type="GO" id="GO:0052381">
    <property type="term" value="F:tRNA dimethylallyltransferase activity"/>
    <property type="evidence" value="ECO:0007669"/>
    <property type="project" value="UniProtKB-UniRule"/>
</dbReference>
<dbReference type="GO" id="GO:0006400">
    <property type="term" value="P:tRNA modification"/>
    <property type="evidence" value="ECO:0007669"/>
    <property type="project" value="TreeGrafter"/>
</dbReference>
<dbReference type="CDD" id="cd02019">
    <property type="entry name" value="NK"/>
    <property type="match status" value="1"/>
</dbReference>
<dbReference type="Gene3D" id="1.10.20.140">
    <property type="match status" value="1"/>
</dbReference>
<dbReference type="Gene3D" id="3.40.50.300">
    <property type="entry name" value="P-loop containing nucleotide triphosphate hydrolases"/>
    <property type="match status" value="1"/>
</dbReference>
<dbReference type="HAMAP" id="MF_00185">
    <property type="entry name" value="IPP_trans"/>
    <property type="match status" value="1"/>
</dbReference>
<dbReference type="InterPro" id="IPR039657">
    <property type="entry name" value="Dimethylallyltransferase"/>
</dbReference>
<dbReference type="InterPro" id="IPR018022">
    <property type="entry name" value="IPT"/>
</dbReference>
<dbReference type="InterPro" id="IPR027417">
    <property type="entry name" value="P-loop_NTPase"/>
</dbReference>
<dbReference type="NCBIfam" id="TIGR00174">
    <property type="entry name" value="miaA"/>
    <property type="match status" value="1"/>
</dbReference>
<dbReference type="PANTHER" id="PTHR11088">
    <property type="entry name" value="TRNA DIMETHYLALLYLTRANSFERASE"/>
    <property type="match status" value="1"/>
</dbReference>
<dbReference type="PANTHER" id="PTHR11088:SF60">
    <property type="entry name" value="TRNA DIMETHYLALLYLTRANSFERASE"/>
    <property type="match status" value="1"/>
</dbReference>
<dbReference type="Pfam" id="PF01715">
    <property type="entry name" value="IPPT"/>
    <property type="match status" value="1"/>
</dbReference>
<dbReference type="SUPFAM" id="SSF52540">
    <property type="entry name" value="P-loop containing nucleoside triphosphate hydrolases"/>
    <property type="match status" value="2"/>
</dbReference>
<reference key="1">
    <citation type="submission" date="2008-03" db="EMBL/GenBank/DDBJ databases">
        <title>Complete sequence of chromosome of Methylobacterium radiotolerans JCM 2831.</title>
        <authorList>
            <consortium name="US DOE Joint Genome Institute"/>
            <person name="Copeland A."/>
            <person name="Lucas S."/>
            <person name="Lapidus A."/>
            <person name="Glavina del Rio T."/>
            <person name="Dalin E."/>
            <person name="Tice H."/>
            <person name="Bruce D."/>
            <person name="Goodwin L."/>
            <person name="Pitluck S."/>
            <person name="Kiss H."/>
            <person name="Brettin T."/>
            <person name="Detter J.C."/>
            <person name="Han C."/>
            <person name="Kuske C.R."/>
            <person name="Schmutz J."/>
            <person name="Larimer F."/>
            <person name="Land M."/>
            <person name="Hauser L."/>
            <person name="Kyrpides N."/>
            <person name="Mikhailova N."/>
            <person name="Marx C.J."/>
            <person name="Richardson P."/>
        </authorList>
    </citation>
    <scope>NUCLEOTIDE SEQUENCE [LARGE SCALE GENOMIC DNA]</scope>
    <source>
        <strain>ATCC 27329 / DSM 1819 / JCM 2831 / NBRC 15690 / NCIMB 10815 / 0-1</strain>
    </source>
</reference>